<protein>
    <recommendedName>
        <fullName evidence="1">Small ribosomal subunit protein uS14</fullName>
    </recommendedName>
    <alternativeName>
        <fullName evidence="2">30S ribosomal protein S14 type Z</fullName>
    </alternativeName>
</protein>
<reference key="1">
    <citation type="journal article" date="2008" name="Appl. Environ. Microbiol.">
        <title>Genome of the epsilonproteobacterial chemolithoautotroph Sulfurimonas denitrificans.</title>
        <authorList>
            <person name="Sievert S.M."/>
            <person name="Scott K.M."/>
            <person name="Klotz M.G."/>
            <person name="Chain P.S.G."/>
            <person name="Hauser L.J."/>
            <person name="Hemp J."/>
            <person name="Huegler M."/>
            <person name="Land M."/>
            <person name="Lapidus A."/>
            <person name="Larimer F.W."/>
            <person name="Lucas S."/>
            <person name="Malfatti S.A."/>
            <person name="Meyer F."/>
            <person name="Paulsen I.T."/>
            <person name="Ren Q."/>
            <person name="Simon J."/>
            <person name="Bailey K."/>
            <person name="Diaz E."/>
            <person name="Fitzpatrick K.A."/>
            <person name="Glover B."/>
            <person name="Gwatney N."/>
            <person name="Korajkic A."/>
            <person name="Long A."/>
            <person name="Mobberley J.M."/>
            <person name="Pantry S.N."/>
            <person name="Pazder G."/>
            <person name="Peterson S."/>
            <person name="Quintanilla J.D."/>
            <person name="Sprinkle R."/>
            <person name="Stephens J."/>
            <person name="Thomas P."/>
            <person name="Vaughn R."/>
            <person name="Weber M.J."/>
            <person name="Wooten L.L."/>
        </authorList>
    </citation>
    <scope>NUCLEOTIDE SEQUENCE [LARGE SCALE GENOMIC DNA]</scope>
    <source>
        <strain>ATCC 33889 / DSM 1251</strain>
    </source>
</reference>
<feature type="chain" id="PRO_0000269155" description="Small ribosomal subunit protein uS14">
    <location>
        <begin position="1"/>
        <end position="61"/>
    </location>
</feature>
<feature type="binding site" evidence="1">
    <location>
        <position position="24"/>
    </location>
    <ligand>
        <name>Zn(2+)</name>
        <dbReference type="ChEBI" id="CHEBI:29105"/>
    </ligand>
</feature>
<feature type="binding site" evidence="1">
    <location>
        <position position="27"/>
    </location>
    <ligand>
        <name>Zn(2+)</name>
        <dbReference type="ChEBI" id="CHEBI:29105"/>
    </ligand>
</feature>
<feature type="binding site" evidence="1">
    <location>
        <position position="40"/>
    </location>
    <ligand>
        <name>Zn(2+)</name>
        <dbReference type="ChEBI" id="CHEBI:29105"/>
    </ligand>
</feature>
<feature type="binding site" evidence="1">
    <location>
        <position position="43"/>
    </location>
    <ligand>
        <name>Zn(2+)</name>
        <dbReference type="ChEBI" id="CHEBI:29105"/>
    </ligand>
</feature>
<accession>Q30TV1</accession>
<sequence length="61" mass="6999">MAKKSMIVKAAREPKFKVRGYTRCQICGRPHSVIRDFGICRVCFRKMANEGLIPGVRKSSW</sequence>
<comment type="function">
    <text evidence="1">Binds 16S rRNA, required for the assembly of 30S particles and may also be responsible for determining the conformation of the 16S rRNA at the A site.</text>
</comment>
<comment type="cofactor">
    <cofactor evidence="1">
        <name>Zn(2+)</name>
        <dbReference type="ChEBI" id="CHEBI:29105"/>
    </cofactor>
    <text evidence="1">Binds 1 zinc ion per subunit.</text>
</comment>
<comment type="subunit">
    <text evidence="1">Part of the 30S ribosomal subunit. Contacts proteins S3 and S10.</text>
</comment>
<comment type="similarity">
    <text evidence="1">Belongs to the universal ribosomal protein uS14 family. Zinc-binding uS14 subfamily.</text>
</comment>
<evidence type="ECO:0000255" key="1">
    <source>
        <dbReference type="HAMAP-Rule" id="MF_01364"/>
    </source>
</evidence>
<evidence type="ECO:0000305" key="2"/>
<proteinExistence type="inferred from homology"/>
<dbReference type="EMBL" id="CP000153">
    <property type="protein sequence ID" value="ABB43580.1"/>
    <property type="molecule type" value="Genomic_DNA"/>
</dbReference>
<dbReference type="RefSeq" id="WP_011371935.1">
    <property type="nucleotide sequence ID" value="NC_007575.1"/>
</dbReference>
<dbReference type="SMR" id="Q30TV1"/>
<dbReference type="STRING" id="326298.Suden_0299"/>
<dbReference type="KEGG" id="tdn:Suden_0299"/>
<dbReference type="eggNOG" id="COG0199">
    <property type="taxonomic scope" value="Bacteria"/>
</dbReference>
<dbReference type="HOGENOM" id="CLU_139869_3_0_7"/>
<dbReference type="OrthoDB" id="9810484at2"/>
<dbReference type="Proteomes" id="UP000002714">
    <property type="component" value="Chromosome"/>
</dbReference>
<dbReference type="GO" id="GO:0005737">
    <property type="term" value="C:cytoplasm"/>
    <property type="evidence" value="ECO:0007669"/>
    <property type="project" value="UniProtKB-ARBA"/>
</dbReference>
<dbReference type="GO" id="GO:0015935">
    <property type="term" value="C:small ribosomal subunit"/>
    <property type="evidence" value="ECO:0007669"/>
    <property type="project" value="TreeGrafter"/>
</dbReference>
<dbReference type="GO" id="GO:0019843">
    <property type="term" value="F:rRNA binding"/>
    <property type="evidence" value="ECO:0007669"/>
    <property type="project" value="UniProtKB-UniRule"/>
</dbReference>
<dbReference type="GO" id="GO:0003735">
    <property type="term" value="F:structural constituent of ribosome"/>
    <property type="evidence" value="ECO:0007669"/>
    <property type="project" value="InterPro"/>
</dbReference>
<dbReference type="GO" id="GO:0008270">
    <property type="term" value="F:zinc ion binding"/>
    <property type="evidence" value="ECO:0007669"/>
    <property type="project" value="UniProtKB-UniRule"/>
</dbReference>
<dbReference type="GO" id="GO:0006412">
    <property type="term" value="P:translation"/>
    <property type="evidence" value="ECO:0007669"/>
    <property type="project" value="UniProtKB-UniRule"/>
</dbReference>
<dbReference type="FunFam" id="4.10.830.10:FF:000001">
    <property type="entry name" value="30S ribosomal protein S14 type Z"/>
    <property type="match status" value="1"/>
</dbReference>
<dbReference type="Gene3D" id="4.10.830.10">
    <property type="entry name" value="30s Ribosomal Protein S14, Chain N"/>
    <property type="match status" value="1"/>
</dbReference>
<dbReference type="HAMAP" id="MF_01364_B">
    <property type="entry name" value="Ribosomal_uS14_2_B"/>
    <property type="match status" value="1"/>
</dbReference>
<dbReference type="InterPro" id="IPR001209">
    <property type="entry name" value="Ribosomal_uS14"/>
</dbReference>
<dbReference type="InterPro" id="IPR023053">
    <property type="entry name" value="Ribosomal_uS14_bact"/>
</dbReference>
<dbReference type="InterPro" id="IPR018271">
    <property type="entry name" value="Ribosomal_uS14_CS"/>
</dbReference>
<dbReference type="InterPro" id="IPR043140">
    <property type="entry name" value="Ribosomal_uS14_sf"/>
</dbReference>
<dbReference type="NCBIfam" id="NF005974">
    <property type="entry name" value="PRK08061.1"/>
    <property type="match status" value="1"/>
</dbReference>
<dbReference type="PANTHER" id="PTHR19836">
    <property type="entry name" value="30S RIBOSOMAL PROTEIN S14"/>
    <property type="match status" value="1"/>
</dbReference>
<dbReference type="PANTHER" id="PTHR19836:SF19">
    <property type="entry name" value="SMALL RIBOSOMAL SUBUNIT PROTEIN US14M"/>
    <property type="match status" value="1"/>
</dbReference>
<dbReference type="Pfam" id="PF00253">
    <property type="entry name" value="Ribosomal_S14"/>
    <property type="match status" value="1"/>
</dbReference>
<dbReference type="SUPFAM" id="SSF57716">
    <property type="entry name" value="Glucocorticoid receptor-like (DNA-binding domain)"/>
    <property type="match status" value="1"/>
</dbReference>
<dbReference type="PROSITE" id="PS00527">
    <property type="entry name" value="RIBOSOMAL_S14"/>
    <property type="match status" value="1"/>
</dbReference>
<name>RS14Z_SULDN</name>
<keyword id="KW-0479">Metal-binding</keyword>
<keyword id="KW-1185">Reference proteome</keyword>
<keyword id="KW-0687">Ribonucleoprotein</keyword>
<keyword id="KW-0689">Ribosomal protein</keyword>
<keyword id="KW-0694">RNA-binding</keyword>
<keyword id="KW-0699">rRNA-binding</keyword>
<keyword id="KW-0862">Zinc</keyword>
<gene>
    <name evidence="1" type="primary">rpsZ</name>
    <name evidence="1" type="synonym">rpsN</name>
    <name type="ordered locus">Suden_0299</name>
</gene>
<organism>
    <name type="scientific">Sulfurimonas denitrificans (strain ATCC 33889 / DSM 1251)</name>
    <name type="common">Thiomicrospira denitrificans (strain ATCC 33889 / DSM 1251)</name>
    <dbReference type="NCBI Taxonomy" id="326298"/>
    <lineage>
        <taxon>Bacteria</taxon>
        <taxon>Pseudomonadati</taxon>
        <taxon>Campylobacterota</taxon>
        <taxon>Epsilonproteobacteria</taxon>
        <taxon>Campylobacterales</taxon>
        <taxon>Sulfurimonadaceae</taxon>
        <taxon>Sulfurimonas</taxon>
    </lineage>
</organism>